<evidence type="ECO:0000255" key="1">
    <source>
        <dbReference type="HAMAP-Rule" id="MF_04002"/>
    </source>
</evidence>
<organismHost>
    <name type="scientific">Homo sapiens</name>
    <name type="common">Human</name>
    <dbReference type="NCBI Taxonomy" id="9606"/>
</organismHost>
<organism>
    <name type="scientific">Human papillomavirus type 60</name>
    <dbReference type="NCBI Taxonomy" id="40540"/>
    <lineage>
        <taxon>Viruses</taxon>
        <taxon>Monodnaviria</taxon>
        <taxon>Shotokuvirae</taxon>
        <taxon>Cossaviricota</taxon>
        <taxon>Papovaviricetes</taxon>
        <taxon>Zurhausenvirales</taxon>
        <taxon>Papillomaviridae</taxon>
        <taxon>Firstpapillomavirinae</taxon>
        <taxon>Gammapapillomavirus</taxon>
        <taxon>Gammapapillomavirus 4</taxon>
    </lineage>
</organism>
<name>VL1_HPV60</name>
<feature type="chain" id="PRO_0000133542" description="Major capsid protein L1">
    <location>
        <begin position="1"/>
        <end position="508"/>
    </location>
</feature>
<feature type="disulfide bond" description="Interchain (with C-437)" evidence="1">
    <location>
        <position position="178"/>
    </location>
</feature>
<feature type="disulfide bond" description="Interchain (with C-178)" evidence="1">
    <location>
        <position position="437"/>
    </location>
</feature>
<comment type="function">
    <text evidence="1">Forms an icosahedral capsid with a T=7 symmetry and a 50 nm diameter. The capsid is composed of 72 pentamers linked to each other by disulfide bonds and associated with L2 proteins. Binds to heparan sulfate proteoglycans on cell surface of basal layer keratinocytes to provide initial virion attachment. This binding mediates a conformational change in the virus capsid that facilitates efficient infection. The virion enters the host cell via endocytosis. During virus trafficking, L1 protein dissociates from the viral DNA and the genomic DNA is released to the host nucleus. The virion assembly takes place within the cell nucleus. Encapsulates the genomic DNA together with protein L2.</text>
</comment>
<comment type="subunit">
    <text evidence="1">Self-assembles into homopentamers. The capsid has an icosahedral symmetry and consists of 72 capsomers, with each capsomer being a pentamer of L1. Interacts with the minor capsid protein L2; this interaction is necessary for viral genome encapsidation. Interacts with protein E2; this interaction enhances E2-dependent replication and transcription activation.</text>
</comment>
<comment type="subcellular location">
    <subcellularLocation>
        <location evidence="1">Virion</location>
    </subcellularLocation>
    <subcellularLocation>
        <location evidence="1">Host nucleus</location>
    </subcellularLocation>
</comment>
<comment type="similarity">
    <text evidence="1">Belongs to the papillomaviridae L1 protein family.</text>
</comment>
<reference key="1">
    <citation type="submission" date="1995-10" db="EMBL/GenBank/DDBJ databases">
        <authorList>
            <person name="Delius H."/>
        </authorList>
    </citation>
    <scope>NUCLEOTIDE SEQUENCE [GENOMIC DNA]</scope>
</reference>
<reference key="2">
    <citation type="journal article" date="1995" name="J. Virol.">
        <title>Analysis of genomic sequences of 95 papillomavirus types: uniting typing, phylogeny, and taxonomy.</title>
        <authorList>
            <person name="Chan S.-Y."/>
            <person name="Delius H."/>
            <person name="Halpern A.L."/>
            <person name="Bernard H.U."/>
        </authorList>
    </citation>
    <scope>NUCLEOTIDE SEQUENCE [GENOMIC DNA] OF 372-467</scope>
</reference>
<dbReference type="EMBL" id="U31792">
    <property type="protein sequence ID" value="AAA79491.1"/>
    <property type="molecule type" value="Genomic_DNA"/>
</dbReference>
<dbReference type="EMBL" id="U21876">
    <property type="protein sequence ID" value="AAA92837.1"/>
    <property type="molecule type" value="Genomic_DNA"/>
</dbReference>
<dbReference type="RefSeq" id="NP_043443.1">
    <property type="nucleotide sequence ID" value="NC_001693.1"/>
</dbReference>
<dbReference type="SMR" id="P50821"/>
<dbReference type="GeneID" id="1403644"/>
<dbReference type="KEGG" id="vg:1403644"/>
<dbReference type="OrthoDB" id="5037at10239"/>
<dbReference type="Proteomes" id="UP000120507">
    <property type="component" value="Genome"/>
</dbReference>
<dbReference type="GO" id="GO:0042025">
    <property type="term" value="C:host cell nucleus"/>
    <property type="evidence" value="ECO:0007669"/>
    <property type="project" value="UniProtKB-SubCell"/>
</dbReference>
<dbReference type="GO" id="GO:0039620">
    <property type="term" value="C:T=7 icosahedral viral capsid"/>
    <property type="evidence" value="ECO:0007669"/>
    <property type="project" value="UniProtKB-UniRule"/>
</dbReference>
<dbReference type="GO" id="GO:0005198">
    <property type="term" value="F:structural molecule activity"/>
    <property type="evidence" value="ECO:0007669"/>
    <property type="project" value="UniProtKB-UniRule"/>
</dbReference>
<dbReference type="GO" id="GO:0075509">
    <property type="term" value="P:endocytosis involved in viral entry into host cell"/>
    <property type="evidence" value="ECO:0007669"/>
    <property type="project" value="UniProtKB-KW"/>
</dbReference>
<dbReference type="GO" id="GO:0019062">
    <property type="term" value="P:virion attachment to host cell"/>
    <property type="evidence" value="ECO:0007669"/>
    <property type="project" value="UniProtKB-UniRule"/>
</dbReference>
<dbReference type="Gene3D" id="2.60.175.20">
    <property type="entry name" value="Major capsid L1 (late) superfamily, Papillomavirus"/>
    <property type="match status" value="2"/>
</dbReference>
<dbReference type="HAMAP" id="MF_04002">
    <property type="entry name" value="PPV_L1"/>
    <property type="match status" value="1"/>
</dbReference>
<dbReference type="InterPro" id="IPR002210">
    <property type="entry name" value="Capsid_L1_Papillomavir"/>
</dbReference>
<dbReference type="InterPro" id="IPR036973">
    <property type="entry name" value="Capsid_L1_sf_Papillomavir"/>
</dbReference>
<dbReference type="InterPro" id="IPR011222">
    <property type="entry name" value="dsDNA_vir_gr_I_capsid"/>
</dbReference>
<dbReference type="Pfam" id="PF00500">
    <property type="entry name" value="Late_protein_L1"/>
    <property type="match status" value="1"/>
</dbReference>
<dbReference type="PRINTS" id="PR00865">
    <property type="entry name" value="HPVCAPSIDL1"/>
</dbReference>
<dbReference type="SUPFAM" id="SSF88648">
    <property type="entry name" value="Group I dsDNA viruses"/>
    <property type="match status" value="1"/>
</dbReference>
<protein>
    <recommendedName>
        <fullName evidence="1">Major capsid protein L1</fullName>
    </recommendedName>
</protein>
<keyword id="KW-0167">Capsid protein</keyword>
<keyword id="KW-1015">Disulfide bond</keyword>
<keyword id="KW-1048">Host nucleus</keyword>
<keyword id="KW-0945">Host-virus interaction</keyword>
<keyword id="KW-0426">Late protein</keyword>
<keyword id="KW-1185">Reference proteome</keyword>
<keyword id="KW-1145">T=7 icosahedral capsid protein</keyword>
<keyword id="KW-1161">Viral attachment to host cell</keyword>
<keyword id="KW-1162">Viral penetration into host cytoplasm</keyword>
<keyword id="KW-0946">Virion</keyword>
<keyword id="KW-1164">Virus endocytosis by host</keyword>
<keyword id="KW-1160">Virus entry into host cell</keyword>
<sequence length="508" mass="57828">MALWLQTAGQLYLPPSKPVARVLSTDEYVQPTNLVFHTGTDRMLIVGHPYFDIIDSGSNNITVPKCSGNQFRVMRLLFPDPNKFAMIDRAVFNPERERLVWRLEGLEIGRGGPLGIGTSGHPLFNKYGDTENPAAYPLKQNNGDDNRMDVSMDPKQMQLFIVGCKPATGEHWDIAKPCDPAPAKGSCPPIKLTQSIIQDGEMCDTGFGNANFITLQEDKSGVPLDITNEICKYPDLLKMTKDIYGDAVFFFGKREQIYSRHYFVRGGIDGDSLPDSGYYLAPQTDKPQNNLGGYSYFPTPSGSVASSDNQLFNRPYWLHRAQGANNGICWGNQLFITIVDNTRNTNLSISVYKQDAAIDNRYKYKQEDFRQYLRHTEEYEVELILRLCKVPLNPDVLAHLNVMDKNILEDWQLSFVPPPPQGIEDAYRYIMSQATMCPTDVPNTEREDPYKQYTFWTIDLQERFSNELSQFSLGKRYLYQYGLLNGRKRSASSFVTKKSKTVKRKRTK</sequence>
<accession>P50821</accession>
<accession>Q80947</accession>
<gene>
    <name evidence="1" type="primary">L1</name>
</gene>
<proteinExistence type="inferred from homology"/>